<evidence type="ECO:0000250" key="1">
    <source>
        <dbReference type="UniProtKB" id="D7A6E5"/>
    </source>
</evidence>
<evidence type="ECO:0000250" key="2">
    <source>
        <dbReference type="UniProtKB" id="Q8RLX0"/>
    </source>
</evidence>
<evidence type="ECO:0000250" key="3">
    <source>
        <dbReference type="UniProtKB" id="Q939U1"/>
    </source>
</evidence>
<evidence type="ECO:0000255" key="4"/>
<evidence type="ECO:0000269" key="5">
    <source>
    </source>
</evidence>
<evidence type="ECO:0000303" key="6">
    <source>
    </source>
</evidence>
<evidence type="ECO:0000305" key="7"/>
<evidence type="ECO:0000312" key="8">
    <source>
        <dbReference type="EMBL" id="AAM72253.1"/>
    </source>
</evidence>
<organism>
    <name type="scientific">Chlorobaculum tepidum (strain ATCC 49652 / DSM 12025 / NBRC 103806 / TLS)</name>
    <name type="common">Chlorobium tepidum</name>
    <dbReference type="NCBI Taxonomy" id="194439"/>
    <lineage>
        <taxon>Bacteria</taxon>
        <taxon>Pseudomonadati</taxon>
        <taxon>Chlorobiota</taxon>
        <taxon>Chlorobiia</taxon>
        <taxon>Chlorobiales</taxon>
        <taxon>Chlorobiaceae</taxon>
        <taxon>Chlorobaculum</taxon>
    </lineage>
</organism>
<accession>Q8KDM7</accession>
<feature type="signal peptide" evidence="5">
    <location>
        <begin position="1"/>
        <end position="27"/>
    </location>
</feature>
<feature type="chain" id="PRO_0000423491" description="L-cysteine S-thiosulfotransferase subunit SoxA">
    <location>
        <begin position="28"/>
        <end position="286"/>
    </location>
</feature>
<feature type="domain" description="Cytochrome c" evidence="4 7">
    <location>
        <begin position="180"/>
        <end position="286"/>
    </location>
</feature>
<feature type="active site" description="Cysteine persulfide intermediate" evidence="1">
    <location>
        <position position="247"/>
    </location>
</feature>
<feature type="binding site" description="covalent" evidence="1">
    <location>
        <position position="200"/>
    </location>
    <ligand>
        <name>heme</name>
        <dbReference type="ChEBI" id="CHEBI:30413"/>
    </ligand>
</feature>
<feature type="binding site" description="axial binding residue" evidence="1">
    <location>
        <position position="204"/>
    </location>
    <ligand>
        <name>heme</name>
        <dbReference type="ChEBI" id="CHEBI:30413"/>
    </ligand>
    <ligandPart>
        <name>Fe</name>
        <dbReference type="ChEBI" id="CHEBI:18248"/>
    </ligandPart>
</feature>
<feature type="binding site" evidence="3">
    <location>
        <position position="243"/>
    </location>
    <ligand>
        <name>substrate</name>
    </ligand>
</feature>
<feature type="binding site" description="axial binding residue" evidence="1">
    <location>
        <position position="247"/>
    </location>
    <ligand>
        <name>heme</name>
        <dbReference type="ChEBI" id="CHEBI:30413"/>
    </ligand>
    <ligandPart>
        <name>Fe</name>
        <dbReference type="ChEBI" id="CHEBI:18248"/>
    </ligandPart>
</feature>
<feature type="disulfide bond" evidence="2">
    <location>
        <begin position="106"/>
        <end position="137"/>
    </location>
</feature>
<gene>
    <name evidence="8" type="primary">soxA</name>
    <name type="ordered locus">CT1019</name>
</gene>
<protein>
    <recommendedName>
        <fullName evidence="7">L-cysteine S-thiosulfotransferase subunit SoxA</fullName>
        <ecNumber evidence="5">2.8.5.2</ecNumber>
    </recommendedName>
    <alternativeName>
        <fullName evidence="6">Cytochrome c551 subunit monoheme</fullName>
    </alternativeName>
    <alternativeName>
        <fullName evidence="2">Protein SoxA</fullName>
    </alternativeName>
    <alternativeName>
        <fullName evidence="2">SoxAX cytochrome complex subunit A</fullName>
    </alternativeName>
    <alternativeName>
        <fullName evidence="8">Sulfur oxidizing protein A</fullName>
    </alternativeName>
    <alternativeName>
        <fullName evidence="1">Thiosulfate-oxidizing multienzyme system protein SoxA</fullName>
        <shortName evidence="1">TOMES protein SoxA</shortName>
    </alternativeName>
</protein>
<reference evidence="8" key="1">
    <citation type="journal article" date="2002" name="Proc. Natl. Acad. Sci. U.S.A.">
        <title>The complete genome sequence of Chlorobium tepidum TLS, a photosynthetic, anaerobic, green-sulfur bacterium.</title>
        <authorList>
            <person name="Eisen J.A."/>
            <person name="Nelson K.E."/>
            <person name="Paulsen I.T."/>
            <person name="Heidelberg J.F."/>
            <person name="Wu M."/>
            <person name="Dodson R.J."/>
            <person name="DeBoy R.T."/>
            <person name="Gwinn M.L."/>
            <person name="Nelson W.C."/>
            <person name="Haft D.H."/>
            <person name="Hickey E.K."/>
            <person name="Peterson J.D."/>
            <person name="Durkin A.S."/>
            <person name="Kolonay J.F."/>
            <person name="Yang F."/>
            <person name="Holt I.E."/>
            <person name="Umayam L.A."/>
            <person name="Mason T.M."/>
            <person name="Brenner M."/>
            <person name="Shea T.P."/>
            <person name="Parksey D.S."/>
            <person name="Nierman W.C."/>
            <person name="Feldblyum T.V."/>
            <person name="Hansen C.L."/>
            <person name="Craven M.B."/>
            <person name="Radune D."/>
            <person name="Vamathevan J.J."/>
            <person name="Khouri H.M."/>
            <person name="White O."/>
            <person name="Gruber T.M."/>
            <person name="Ketchum K.A."/>
            <person name="Venter J.C."/>
            <person name="Tettelin H."/>
            <person name="Bryant D.A."/>
            <person name="Fraser C.M."/>
        </authorList>
    </citation>
    <scope>NUCLEOTIDE SEQUENCE [LARGE SCALE GENOMIC DNA]</scope>
    <source>
        <strain>ATCC 49652 / DSM 12025 / NBRC 103806 / TLS</strain>
    </source>
</reference>
<reference evidence="7" key="2">
    <citation type="journal article" date="2008" name="J. Bacteriol.">
        <title>SoxAX binding protein, a novel component of the thiosulfate-oxidizing multienzyme system in the green sulfur bacterium Chlorobium tepidum.</title>
        <authorList>
            <person name="Ogawa T."/>
            <person name="Furusawa T."/>
            <person name="Nomura R."/>
            <person name="Seo D."/>
            <person name="Hosoya-Matsuda N."/>
            <person name="Sakurai H."/>
            <person name="Inoue K."/>
        </authorList>
    </citation>
    <scope>PROTEIN SEQUENCE OF 28-39</scope>
    <scope>FUNCTION</scope>
    <scope>CATALYTIC ACTIVITY</scope>
    <scope>COFACTOR</scope>
    <scope>BIOPHYSICOCHEMICAL PROPERTIES</scope>
    <scope>SUBUNIT</scope>
    <scope>INTERACTION WITH CT1020</scope>
    <scope>SUBCELLULAR LOCATION</scope>
    <scope>MASS SPECTROMETRY</scope>
    <scope>POTENTIOMETRIC TITRATION OF SOXA AND THE SOXAX-CT1020 COMPLEX</scope>
    <scope>SIGNAL</scope>
    <source>
        <strain evidence="5">ATCC 49652 / DSM 12025 / NBRC 103806 / TLS</strain>
    </source>
</reference>
<comment type="function">
    <text evidence="3 5">C-type monoheme cytochrome, which is part of the SoxAX cytochrome complex involved in sulfur oxidation. The SoxAX complex catalyzes the formation of a heterodisulfide bond between the conserved cysteine residue on a sulfur carrier SoxYZ complex subunit SoxY and thiosulfate or other inorganic sulfur substrates. This leads to the liberation of two electrons, which may be transferred from the SoxAX complex to another cytochrome c and which then may be used for reductive CO(2) fixation.</text>
</comment>
<comment type="catalytic activity">
    <reaction evidence="5">
        <text>L-cysteinyl-[SoxY protein] + thiosulfate + 2 Fe(III)-[cytochrome c] = S-sulfosulfanyl-L-cysteinyl-[SoxY protein] + 2 Fe(II)-[cytochrome c] + 2 H(+)</text>
        <dbReference type="Rhea" id="RHEA:56720"/>
        <dbReference type="Rhea" id="RHEA-COMP:10350"/>
        <dbReference type="Rhea" id="RHEA-COMP:14328"/>
        <dbReference type="Rhea" id="RHEA-COMP:14399"/>
        <dbReference type="Rhea" id="RHEA-COMP:14691"/>
        <dbReference type="ChEBI" id="CHEBI:15378"/>
        <dbReference type="ChEBI" id="CHEBI:29033"/>
        <dbReference type="ChEBI" id="CHEBI:29034"/>
        <dbReference type="ChEBI" id="CHEBI:29950"/>
        <dbReference type="ChEBI" id="CHEBI:33542"/>
        <dbReference type="ChEBI" id="CHEBI:139321"/>
        <dbReference type="EC" id="2.8.5.2"/>
    </reaction>
</comment>
<comment type="catalytic activity">
    <reaction evidence="5">
        <text>S-sulfanyl-L-cysteinyl-[SoxY protein] + thiosulfate + 2 Fe(III)-[cytochrome c] = S-(2-sulfodisulfanyl)-L-cysteinyl-[SoxY protein] + 2 Fe(II)-[cytochrome c] + 2 H(+)</text>
        <dbReference type="Rhea" id="RHEA:51224"/>
        <dbReference type="Rhea" id="RHEA-COMP:10350"/>
        <dbReference type="Rhea" id="RHEA-COMP:14399"/>
        <dbReference type="Rhea" id="RHEA-COMP:14689"/>
        <dbReference type="Rhea" id="RHEA-COMP:14690"/>
        <dbReference type="ChEBI" id="CHEBI:15378"/>
        <dbReference type="ChEBI" id="CHEBI:29033"/>
        <dbReference type="ChEBI" id="CHEBI:29034"/>
        <dbReference type="ChEBI" id="CHEBI:33542"/>
        <dbReference type="ChEBI" id="CHEBI:61963"/>
        <dbReference type="ChEBI" id="CHEBI:140664"/>
        <dbReference type="EC" id="2.8.5.2"/>
    </reaction>
</comment>
<comment type="cofactor">
    <cofactor evidence="5">
        <name>heme</name>
        <dbReference type="ChEBI" id="CHEBI:30413"/>
    </cofactor>
    <text evidence="5">Binds 1 heme group per subunit.</text>
</comment>
<comment type="biophysicochemical properties">
    <kinetics>
        <KM evidence="5">0.17 mM for thiosulfate using purified SoxAX-CT1020, SoxYZ and SoxB in the assay system (at pH 6.0)</KM>
    </kinetics>
    <phDependence>
        <text evidence="5">Optimum pH is 6.0-6.5.</text>
    </phDependence>
    <redoxPotential>
        <text evidence="5">E(0) is less than -550 mV (at pH 10.0).</text>
    </redoxPotential>
    <temperatureDependence>
        <text evidence="5">Optimum temperature is 55-60 degrees Celsius.</text>
    </temperatureDependence>
</comment>
<comment type="subunit">
    <text evidence="1 5">Heterodimer of SoxA and SoxX. The SoxAX complex interacts with CT1020, SoxAX-binding protein SaxB (SoxK); this interaction seems to be between SoxA and CT1020 and stimulates catalytic activity of the SoxAX complex.</text>
</comment>
<comment type="subcellular location">
    <subcellularLocation>
        <location evidence="5">Periplasm</location>
    </subcellularLocation>
</comment>
<comment type="PTM">
    <text evidence="2">Cysteine persulfide at Cys-247.</text>
</comment>
<comment type="mass spectrometry" mass="29918.0" method="MALDI" evidence="5">
    <text>The measured mass is that of mature SoxA with a heme bound and with a cysteine persulfide modification.</text>
</comment>
<comment type="similarity">
    <text evidence="4">Belongs to the SoxA family.</text>
</comment>
<keyword id="KW-0903">Direct protein sequencing</keyword>
<keyword id="KW-1015">Disulfide bond</keyword>
<keyword id="KW-0249">Electron transport</keyword>
<keyword id="KW-0349">Heme</keyword>
<keyword id="KW-0408">Iron</keyword>
<keyword id="KW-0479">Metal-binding</keyword>
<keyword id="KW-0574">Periplasm</keyword>
<keyword id="KW-1185">Reference proteome</keyword>
<keyword id="KW-0732">Signal</keyword>
<keyword id="KW-0808">Transferase</keyword>
<keyword id="KW-0813">Transport</keyword>
<name>SOXA_CHLTE</name>
<sequence length="286" mass="32134">MKKTIQRGLFTGALVLMTAMTAKPANAEVNYQALVDADVKAFQGFFRKEFPDVKLEDFGNGVYALDEDARKQWKEMEEFPPYELDVEAGKALFNKPFANGKSLASCFPNGGAVRGMYPYFDEKRKEVVTLEMAINECRVANGEKPYAWEKGDIARVSAYIASISRGQKVDVKVKSKAAYDAYMKGKKFFYAKRGQLNMSCSGCHMEYAGRHLRAEIISPALGHTTHFPVFRSKWGEIGTLHRRYAGCSNNIGAKPFAPQSEEYRDLEFFQTVMSNGLKYNGPASRK</sequence>
<dbReference type="EC" id="2.8.5.2" evidence="5"/>
<dbReference type="EMBL" id="AE006470">
    <property type="protein sequence ID" value="AAM72253.1"/>
    <property type="molecule type" value="Genomic_DNA"/>
</dbReference>
<dbReference type="RefSeq" id="NP_661911.1">
    <property type="nucleotide sequence ID" value="NC_002932.3"/>
</dbReference>
<dbReference type="RefSeq" id="WP_010932698.1">
    <property type="nucleotide sequence ID" value="NC_002932.3"/>
</dbReference>
<dbReference type="SMR" id="Q8KDM7"/>
<dbReference type="STRING" id="194439.CT1019"/>
<dbReference type="EnsemblBacteria" id="AAM72253">
    <property type="protein sequence ID" value="AAM72253"/>
    <property type="gene ID" value="CT1019"/>
</dbReference>
<dbReference type="KEGG" id="cte:CT1019"/>
<dbReference type="PATRIC" id="fig|194439.7.peg.927"/>
<dbReference type="eggNOG" id="COG3258">
    <property type="taxonomic scope" value="Bacteria"/>
</dbReference>
<dbReference type="HOGENOM" id="CLU_079910_1_0_10"/>
<dbReference type="OrthoDB" id="9808312at2"/>
<dbReference type="Proteomes" id="UP000001007">
    <property type="component" value="Chromosome"/>
</dbReference>
<dbReference type="GO" id="GO:0070069">
    <property type="term" value="C:cytochrome complex"/>
    <property type="evidence" value="ECO:0000314"/>
    <property type="project" value="UniProtKB"/>
</dbReference>
<dbReference type="GO" id="GO:0042597">
    <property type="term" value="C:periplasmic space"/>
    <property type="evidence" value="ECO:0000314"/>
    <property type="project" value="UniProtKB"/>
</dbReference>
<dbReference type="GO" id="GO:0009055">
    <property type="term" value="F:electron transfer activity"/>
    <property type="evidence" value="ECO:0000314"/>
    <property type="project" value="UniProtKB"/>
</dbReference>
<dbReference type="GO" id="GO:0020037">
    <property type="term" value="F:heme binding"/>
    <property type="evidence" value="ECO:0000314"/>
    <property type="project" value="UniProtKB"/>
</dbReference>
<dbReference type="GO" id="GO:0005506">
    <property type="term" value="F:iron ion binding"/>
    <property type="evidence" value="ECO:0000314"/>
    <property type="project" value="UniProtKB"/>
</dbReference>
<dbReference type="GO" id="GO:0046872">
    <property type="term" value="F:metal ion binding"/>
    <property type="evidence" value="ECO:0000314"/>
    <property type="project" value="UniProtKB"/>
</dbReference>
<dbReference type="GO" id="GO:0016491">
    <property type="term" value="F:oxidoreductase activity"/>
    <property type="evidence" value="ECO:0000314"/>
    <property type="project" value="UniProtKB"/>
</dbReference>
<dbReference type="GO" id="GO:0016669">
    <property type="term" value="F:oxidoreductase activity, acting on a sulfur group of donors, cytochrome as acceptor"/>
    <property type="evidence" value="ECO:0000314"/>
    <property type="project" value="UniProtKB"/>
</dbReference>
<dbReference type="GO" id="GO:0046982">
    <property type="term" value="F:protein heterodimerization activity"/>
    <property type="evidence" value="ECO:0000353"/>
    <property type="project" value="UniProtKB"/>
</dbReference>
<dbReference type="GO" id="GO:0004792">
    <property type="term" value="F:thiosulfate-cyanide sulfurtransferase activity"/>
    <property type="evidence" value="ECO:0000314"/>
    <property type="project" value="UniProtKB"/>
</dbReference>
<dbReference type="GO" id="GO:0019417">
    <property type="term" value="P:sulfur oxidation"/>
    <property type="evidence" value="ECO:0000314"/>
    <property type="project" value="UniProtKB"/>
</dbReference>
<dbReference type="Gene3D" id="1.10.760.10">
    <property type="entry name" value="Cytochrome c-like domain"/>
    <property type="match status" value="2"/>
</dbReference>
<dbReference type="InterPro" id="IPR009056">
    <property type="entry name" value="Cyt_c-like_dom"/>
</dbReference>
<dbReference type="InterPro" id="IPR036909">
    <property type="entry name" value="Cyt_c-like_dom_sf"/>
</dbReference>
<dbReference type="InterPro" id="IPR025710">
    <property type="entry name" value="SoxA"/>
</dbReference>
<dbReference type="NCBIfam" id="TIGR04484">
    <property type="entry name" value="thiosulf_SoxA"/>
    <property type="match status" value="1"/>
</dbReference>
<dbReference type="Pfam" id="PF21342">
    <property type="entry name" value="SoxA-TsdA_cyt-c"/>
    <property type="match status" value="1"/>
</dbReference>
<dbReference type="PIRSF" id="PIRSF038455">
    <property type="entry name" value="SoxA"/>
    <property type="match status" value="1"/>
</dbReference>
<dbReference type="SUPFAM" id="SSF46626">
    <property type="entry name" value="Cytochrome c"/>
    <property type="match status" value="2"/>
</dbReference>
<proteinExistence type="evidence at protein level"/>